<sequence length="308" mass="34287">MSTTLLQSDLPGLPLRHRGKVRDVFDIPRDRLPADAPPGDYLLMVATDRLSAFDVVLPDPIPGKGEMLCQVSNFWFHKTEHLMPNHLVDIRVEQVLPEGVDPALYAKRAVVTRKLKPVPVEAIARGYLIGSGWKDYQRTGKISGIELPDGLRQAEKLPEPIFTPSTKAAVGDHDENIDFDAMVKTVGAELAERVRDATLRIYRFAADFAAECGILLADTKFEFGTDADGRLYVMDEMLTPDSSRYWPADQYELGTSPPSYDKQFVRDYLETLDWGKTAPGPSLPADVIDRTRAKYAEALQRLAGISVD</sequence>
<keyword id="KW-0067">ATP-binding</keyword>
<keyword id="KW-0436">Ligase</keyword>
<keyword id="KW-0547">Nucleotide-binding</keyword>
<keyword id="KW-0658">Purine biosynthesis</keyword>
<feature type="chain" id="PRO_1000096028" description="Phosphoribosylaminoimidazole-succinocarboxamide synthase">
    <location>
        <begin position="1"/>
        <end position="308"/>
    </location>
</feature>
<comment type="catalytic activity">
    <reaction evidence="1">
        <text>5-amino-1-(5-phospho-D-ribosyl)imidazole-4-carboxylate + L-aspartate + ATP = (2S)-2-[5-amino-1-(5-phospho-beta-D-ribosyl)imidazole-4-carboxamido]succinate + ADP + phosphate + 2 H(+)</text>
        <dbReference type="Rhea" id="RHEA:22628"/>
        <dbReference type="ChEBI" id="CHEBI:15378"/>
        <dbReference type="ChEBI" id="CHEBI:29991"/>
        <dbReference type="ChEBI" id="CHEBI:30616"/>
        <dbReference type="ChEBI" id="CHEBI:43474"/>
        <dbReference type="ChEBI" id="CHEBI:58443"/>
        <dbReference type="ChEBI" id="CHEBI:77657"/>
        <dbReference type="ChEBI" id="CHEBI:456216"/>
        <dbReference type="EC" id="6.3.2.6"/>
    </reaction>
</comment>
<comment type="pathway">
    <text evidence="1">Purine metabolism; IMP biosynthesis via de novo pathway; 5-amino-1-(5-phospho-D-ribosyl)imidazole-4-carboxamide from 5-amino-1-(5-phospho-D-ribosyl)imidazole-4-carboxylate: step 1/2.</text>
</comment>
<comment type="similarity">
    <text evidence="1">Belongs to the SAICAR synthetase family.</text>
</comment>
<organism>
    <name type="scientific">Xanthomonas oryzae pv. oryzae (strain PXO99A)</name>
    <dbReference type="NCBI Taxonomy" id="360094"/>
    <lineage>
        <taxon>Bacteria</taxon>
        <taxon>Pseudomonadati</taxon>
        <taxon>Pseudomonadota</taxon>
        <taxon>Gammaproteobacteria</taxon>
        <taxon>Lysobacterales</taxon>
        <taxon>Lysobacteraceae</taxon>
        <taxon>Xanthomonas</taxon>
    </lineage>
</organism>
<dbReference type="EC" id="6.3.2.6" evidence="1"/>
<dbReference type="EMBL" id="CP000967">
    <property type="protein sequence ID" value="ACD57449.1"/>
    <property type="molecule type" value="Genomic_DNA"/>
</dbReference>
<dbReference type="RefSeq" id="WP_012444032.1">
    <property type="nucleotide sequence ID" value="NC_010717.2"/>
</dbReference>
<dbReference type="SMR" id="B2SM33"/>
<dbReference type="KEGG" id="xop:PXO_04200"/>
<dbReference type="eggNOG" id="COG0152">
    <property type="taxonomic scope" value="Bacteria"/>
</dbReference>
<dbReference type="HOGENOM" id="CLU_045637_0_2_6"/>
<dbReference type="UniPathway" id="UPA00074">
    <property type="reaction ID" value="UER00131"/>
</dbReference>
<dbReference type="Proteomes" id="UP000001740">
    <property type="component" value="Chromosome"/>
</dbReference>
<dbReference type="GO" id="GO:0005737">
    <property type="term" value="C:cytoplasm"/>
    <property type="evidence" value="ECO:0007669"/>
    <property type="project" value="TreeGrafter"/>
</dbReference>
<dbReference type="GO" id="GO:0005524">
    <property type="term" value="F:ATP binding"/>
    <property type="evidence" value="ECO:0007669"/>
    <property type="project" value="UniProtKB-KW"/>
</dbReference>
<dbReference type="GO" id="GO:0004639">
    <property type="term" value="F:phosphoribosylaminoimidazolesuccinocarboxamide synthase activity"/>
    <property type="evidence" value="ECO:0007669"/>
    <property type="project" value="UniProtKB-UniRule"/>
</dbReference>
<dbReference type="GO" id="GO:0006189">
    <property type="term" value="P:'de novo' IMP biosynthetic process"/>
    <property type="evidence" value="ECO:0007669"/>
    <property type="project" value="UniProtKB-UniRule"/>
</dbReference>
<dbReference type="CDD" id="cd01414">
    <property type="entry name" value="SAICAR_synt_Sc"/>
    <property type="match status" value="1"/>
</dbReference>
<dbReference type="FunFam" id="3.30.200.20:FF:000365">
    <property type="entry name" value="Phosphoribosylaminoimidazole-succinocarboxamide synthase"/>
    <property type="match status" value="1"/>
</dbReference>
<dbReference type="FunFam" id="3.30.470.20:FF:000015">
    <property type="entry name" value="Phosphoribosylaminoimidazole-succinocarboxamide synthase"/>
    <property type="match status" value="1"/>
</dbReference>
<dbReference type="Gene3D" id="3.30.470.20">
    <property type="entry name" value="ATP-grasp fold, B domain"/>
    <property type="match status" value="1"/>
</dbReference>
<dbReference type="Gene3D" id="3.30.200.20">
    <property type="entry name" value="Phosphorylase Kinase, domain 1"/>
    <property type="match status" value="1"/>
</dbReference>
<dbReference type="HAMAP" id="MF_00137">
    <property type="entry name" value="SAICAR_synth"/>
    <property type="match status" value="1"/>
</dbReference>
<dbReference type="InterPro" id="IPR028923">
    <property type="entry name" value="SAICAR_synt/ADE2_N"/>
</dbReference>
<dbReference type="InterPro" id="IPR001636">
    <property type="entry name" value="SAICAR_synth"/>
</dbReference>
<dbReference type="InterPro" id="IPR018236">
    <property type="entry name" value="SAICAR_synthetase_CS"/>
</dbReference>
<dbReference type="NCBIfam" id="NF010568">
    <property type="entry name" value="PRK13961.1"/>
    <property type="match status" value="1"/>
</dbReference>
<dbReference type="NCBIfam" id="TIGR00081">
    <property type="entry name" value="purC"/>
    <property type="match status" value="1"/>
</dbReference>
<dbReference type="PANTHER" id="PTHR43700">
    <property type="entry name" value="PHOSPHORIBOSYLAMINOIMIDAZOLE-SUCCINOCARBOXAMIDE SYNTHASE"/>
    <property type="match status" value="1"/>
</dbReference>
<dbReference type="PANTHER" id="PTHR43700:SF1">
    <property type="entry name" value="PHOSPHORIBOSYLAMINOIMIDAZOLE-SUCCINOCARBOXAMIDE SYNTHASE"/>
    <property type="match status" value="1"/>
</dbReference>
<dbReference type="Pfam" id="PF01259">
    <property type="entry name" value="SAICAR_synt"/>
    <property type="match status" value="1"/>
</dbReference>
<dbReference type="SUPFAM" id="SSF56104">
    <property type="entry name" value="SAICAR synthase-like"/>
    <property type="match status" value="1"/>
</dbReference>
<dbReference type="PROSITE" id="PS01057">
    <property type="entry name" value="SAICAR_SYNTHETASE_1"/>
    <property type="match status" value="1"/>
</dbReference>
<dbReference type="PROSITE" id="PS01058">
    <property type="entry name" value="SAICAR_SYNTHETASE_2"/>
    <property type="match status" value="1"/>
</dbReference>
<reference key="1">
    <citation type="journal article" date="2008" name="BMC Genomics">
        <title>Genome sequence and rapid evolution of the rice pathogen Xanthomonas oryzae pv. oryzae PXO99A.</title>
        <authorList>
            <person name="Salzberg S.L."/>
            <person name="Sommer D.D."/>
            <person name="Schatz M.C."/>
            <person name="Phillippy A.M."/>
            <person name="Rabinowicz P.D."/>
            <person name="Tsuge S."/>
            <person name="Furutani A."/>
            <person name="Ochiai H."/>
            <person name="Delcher A.L."/>
            <person name="Kelley D."/>
            <person name="Madupu R."/>
            <person name="Puiu D."/>
            <person name="Radune D."/>
            <person name="Shumway M."/>
            <person name="Trapnell C."/>
            <person name="Aparna G."/>
            <person name="Jha G."/>
            <person name="Pandey A."/>
            <person name="Patil P.B."/>
            <person name="Ishihara H."/>
            <person name="Meyer D.F."/>
            <person name="Szurek B."/>
            <person name="Verdier V."/>
            <person name="Koebnik R."/>
            <person name="Dow J.M."/>
            <person name="Ryan R.P."/>
            <person name="Hirata H."/>
            <person name="Tsuyumu S."/>
            <person name="Won Lee S."/>
            <person name="Seo Y.-S."/>
            <person name="Sriariyanum M."/>
            <person name="Ronald P.C."/>
            <person name="Sonti R.V."/>
            <person name="Van Sluys M.-A."/>
            <person name="Leach J.E."/>
            <person name="White F.F."/>
            <person name="Bogdanove A.J."/>
        </authorList>
    </citation>
    <scope>NUCLEOTIDE SEQUENCE [LARGE SCALE GENOMIC DNA]</scope>
    <source>
        <strain>PXO99A</strain>
    </source>
</reference>
<gene>
    <name evidence="1" type="primary">purC</name>
    <name type="ordered locus">PXO_04200</name>
</gene>
<evidence type="ECO:0000255" key="1">
    <source>
        <dbReference type="HAMAP-Rule" id="MF_00137"/>
    </source>
</evidence>
<protein>
    <recommendedName>
        <fullName evidence="1">Phosphoribosylaminoimidazole-succinocarboxamide synthase</fullName>
        <ecNumber evidence="1">6.3.2.6</ecNumber>
    </recommendedName>
    <alternativeName>
        <fullName evidence="1">SAICAR synthetase</fullName>
    </alternativeName>
</protein>
<name>PUR7_XANOP</name>
<accession>B2SM33</accession>
<proteinExistence type="inferred from homology"/>